<name>DAPB_ASPOR</name>
<proteinExistence type="inferred from homology"/>
<reference key="1">
    <citation type="journal article" date="2005" name="Nature">
        <title>Genome sequencing and analysis of Aspergillus oryzae.</title>
        <authorList>
            <person name="Machida M."/>
            <person name="Asai K."/>
            <person name="Sano M."/>
            <person name="Tanaka T."/>
            <person name="Kumagai T."/>
            <person name="Terai G."/>
            <person name="Kusumoto K."/>
            <person name="Arima T."/>
            <person name="Akita O."/>
            <person name="Kashiwagi Y."/>
            <person name="Abe K."/>
            <person name="Gomi K."/>
            <person name="Horiuchi H."/>
            <person name="Kitamoto K."/>
            <person name="Kobayashi T."/>
            <person name="Takeuchi M."/>
            <person name="Denning D.W."/>
            <person name="Galagan J.E."/>
            <person name="Nierman W.C."/>
            <person name="Yu J."/>
            <person name="Archer D.B."/>
            <person name="Bennett J.W."/>
            <person name="Bhatnagar D."/>
            <person name="Cleveland T.E."/>
            <person name="Fedorova N.D."/>
            <person name="Gotoh O."/>
            <person name="Horikawa H."/>
            <person name="Hosoyama A."/>
            <person name="Ichinomiya M."/>
            <person name="Igarashi R."/>
            <person name="Iwashita K."/>
            <person name="Juvvadi P.R."/>
            <person name="Kato M."/>
            <person name="Kato Y."/>
            <person name="Kin T."/>
            <person name="Kokubun A."/>
            <person name="Maeda H."/>
            <person name="Maeyama N."/>
            <person name="Maruyama J."/>
            <person name="Nagasaki H."/>
            <person name="Nakajima T."/>
            <person name="Oda K."/>
            <person name="Okada K."/>
            <person name="Paulsen I."/>
            <person name="Sakamoto K."/>
            <person name="Sawano T."/>
            <person name="Takahashi M."/>
            <person name="Takase K."/>
            <person name="Terabayashi Y."/>
            <person name="Wortman J.R."/>
            <person name="Yamada O."/>
            <person name="Yamagata Y."/>
            <person name="Anazawa H."/>
            <person name="Hata Y."/>
            <person name="Koide Y."/>
            <person name="Komori T."/>
            <person name="Koyama Y."/>
            <person name="Minetoki T."/>
            <person name="Suharnan S."/>
            <person name="Tanaka A."/>
            <person name="Isono K."/>
            <person name="Kuhara S."/>
            <person name="Ogasawara N."/>
            <person name="Kikuchi H."/>
        </authorList>
    </citation>
    <scope>NUCLEOTIDE SEQUENCE [LARGE SCALE GENOMIC DNA]</scope>
    <source>
        <strain>ATCC 42149 / RIB 40</strain>
    </source>
</reference>
<accession>Q2UPW4</accession>
<gene>
    <name type="primary">dapB</name>
    <name type="ORF">AO090005001482</name>
</gene>
<feature type="chain" id="PRO_0000412138" description="Probable dipeptidyl-aminopeptidase B">
    <location>
        <begin position="1"/>
        <end position="902"/>
    </location>
</feature>
<feature type="topological domain" description="Cytoplasmic" evidence="2">
    <location>
        <begin position="1"/>
        <end position="78"/>
    </location>
</feature>
<feature type="transmembrane region" description="Helical; Signal-anchor for type II membrane protein" evidence="2">
    <location>
        <begin position="79"/>
        <end position="99"/>
    </location>
</feature>
<feature type="topological domain" description="Vacuolar" evidence="2">
    <location>
        <begin position="100"/>
        <end position="902"/>
    </location>
</feature>
<feature type="region of interest" description="Disordered" evidence="3">
    <location>
        <begin position="1"/>
        <end position="23"/>
    </location>
</feature>
<feature type="region of interest" description="Disordered" evidence="3">
    <location>
        <begin position="53"/>
        <end position="72"/>
    </location>
</feature>
<feature type="compositionally biased region" description="Low complexity" evidence="3">
    <location>
        <begin position="7"/>
        <end position="21"/>
    </location>
</feature>
<feature type="active site" description="Charge relay system" evidence="1">
    <location>
        <position position="740"/>
    </location>
</feature>
<feature type="active site" description="Charge relay system" evidence="1">
    <location>
        <position position="817"/>
    </location>
</feature>
<feature type="active site" description="Charge relay system" evidence="1">
    <location>
        <position position="850"/>
    </location>
</feature>
<feature type="glycosylation site" description="N-linked (GlcNAc...) asparagine" evidence="2">
    <location>
        <position position="335"/>
    </location>
</feature>
<feature type="glycosylation site" description="N-linked (GlcNAc...) asparagine" evidence="2">
    <location>
        <position position="626"/>
    </location>
</feature>
<feature type="glycosylation site" description="N-linked (GlcNAc...) asparagine" evidence="2">
    <location>
        <position position="794"/>
    </location>
</feature>
<feature type="glycosylation site" description="N-linked (GlcNAc...) asparagine" evidence="2">
    <location>
        <position position="799"/>
    </location>
</feature>
<evidence type="ECO:0000250" key="1"/>
<evidence type="ECO:0000255" key="2"/>
<evidence type="ECO:0000256" key="3">
    <source>
        <dbReference type="SAM" id="MobiDB-lite"/>
    </source>
</evidence>
<evidence type="ECO:0000305" key="4"/>
<dbReference type="EC" id="3.4.14.5"/>
<dbReference type="EMBL" id="BA000049">
    <property type="protein sequence ID" value="BAE56401.1"/>
    <property type="molecule type" value="Genomic_DNA"/>
</dbReference>
<dbReference type="SMR" id="Q2UPW4"/>
<dbReference type="STRING" id="510516.Q2UPW4"/>
<dbReference type="ESTHER" id="aspor-q2upw4">
    <property type="family name" value="DPP4N_Peptidase_S9"/>
</dbReference>
<dbReference type="MEROPS" id="S09.006"/>
<dbReference type="GlyCosmos" id="Q2UPW4">
    <property type="glycosylation" value="4 sites, No reported glycans"/>
</dbReference>
<dbReference type="EnsemblFungi" id="BAE56401">
    <property type="protein sequence ID" value="BAE56401"/>
    <property type="gene ID" value="AO090005001482"/>
</dbReference>
<dbReference type="HOGENOM" id="CLU_006105_0_1_1"/>
<dbReference type="Proteomes" id="UP000006564">
    <property type="component" value="Chromosome 1"/>
</dbReference>
<dbReference type="GO" id="GO:0000329">
    <property type="term" value="C:fungal-type vacuole membrane"/>
    <property type="evidence" value="ECO:0007669"/>
    <property type="project" value="EnsemblFungi"/>
</dbReference>
<dbReference type="GO" id="GO:0005886">
    <property type="term" value="C:plasma membrane"/>
    <property type="evidence" value="ECO:0007669"/>
    <property type="project" value="TreeGrafter"/>
</dbReference>
<dbReference type="GO" id="GO:0004177">
    <property type="term" value="F:aminopeptidase activity"/>
    <property type="evidence" value="ECO:0007669"/>
    <property type="project" value="UniProtKB-KW"/>
</dbReference>
<dbReference type="GO" id="GO:0008239">
    <property type="term" value="F:dipeptidyl-peptidase activity"/>
    <property type="evidence" value="ECO:0007669"/>
    <property type="project" value="UniProtKB-EC"/>
</dbReference>
<dbReference type="GO" id="GO:0008236">
    <property type="term" value="F:serine-type peptidase activity"/>
    <property type="evidence" value="ECO:0007669"/>
    <property type="project" value="UniProtKB-KW"/>
</dbReference>
<dbReference type="GO" id="GO:0006508">
    <property type="term" value="P:proteolysis"/>
    <property type="evidence" value="ECO:0007669"/>
    <property type="project" value="UniProtKB-KW"/>
</dbReference>
<dbReference type="FunFam" id="3.40.50.1820:FF:000003">
    <property type="entry name" value="Dipeptidyl peptidase 4"/>
    <property type="match status" value="1"/>
</dbReference>
<dbReference type="Gene3D" id="3.40.50.1820">
    <property type="entry name" value="alpha/beta hydrolase"/>
    <property type="match status" value="1"/>
</dbReference>
<dbReference type="Gene3D" id="2.140.10.30">
    <property type="entry name" value="Dipeptidylpeptidase IV, N-terminal domain"/>
    <property type="match status" value="1"/>
</dbReference>
<dbReference type="InterPro" id="IPR029058">
    <property type="entry name" value="AB_hydrolase_fold"/>
</dbReference>
<dbReference type="InterPro" id="IPR001375">
    <property type="entry name" value="Peptidase_S9_cat"/>
</dbReference>
<dbReference type="InterPro" id="IPR002469">
    <property type="entry name" value="Peptidase_S9B_N"/>
</dbReference>
<dbReference type="InterPro" id="IPR050278">
    <property type="entry name" value="Serine_Prot_S9B/DPPIV"/>
</dbReference>
<dbReference type="PANTHER" id="PTHR11731:SF200">
    <property type="entry name" value="DIPEPTIDYL PEPTIDASE 10, ISOFORM B"/>
    <property type="match status" value="1"/>
</dbReference>
<dbReference type="PANTHER" id="PTHR11731">
    <property type="entry name" value="PROTEASE FAMILY S9B,C DIPEPTIDYL-PEPTIDASE IV-RELATED"/>
    <property type="match status" value="1"/>
</dbReference>
<dbReference type="Pfam" id="PF00930">
    <property type="entry name" value="DPPIV_N"/>
    <property type="match status" value="1"/>
</dbReference>
<dbReference type="Pfam" id="PF00326">
    <property type="entry name" value="Peptidase_S9"/>
    <property type="match status" value="1"/>
</dbReference>
<dbReference type="SUPFAM" id="SSF53474">
    <property type="entry name" value="alpha/beta-Hydrolases"/>
    <property type="match status" value="1"/>
</dbReference>
<dbReference type="SUPFAM" id="SSF82171">
    <property type="entry name" value="DPP6 N-terminal domain-like"/>
    <property type="match status" value="1"/>
</dbReference>
<organism>
    <name type="scientific">Aspergillus oryzae (strain ATCC 42149 / RIB 40)</name>
    <name type="common">Yellow koji mold</name>
    <dbReference type="NCBI Taxonomy" id="510516"/>
    <lineage>
        <taxon>Eukaryota</taxon>
        <taxon>Fungi</taxon>
        <taxon>Dikarya</taxon>
        <taxon>Ascomycota</taxon>
        <taxon>Pezizomycotina</taxon>
        <taxon>Eurotiomycetes</taxon>
        <taxon>Eurotiomycetidae</taxon>
        <taxon>Eurotiales</taxon>
        <taxon>Aspergillaceae</taxon>
        <taxon>Aspergillus</taxon>
        <taxon>Aspergillus subgen. Circumdati</taxon>
    </lineage>
</organism>
<protein>
    <recommendedName>
        <fullName>Probable dipeptidyl-aminopeptidase B</fullName>
        <shortName>DPAP B</shortName>
        <ecNumber>3.4.14.5</ecNumber>
    </recommendedName>
</protein>
<keyword id="KW-0031">Aminopeptidase</keyword>
<keyword id="KW-0325">Glycoprotein</keyword>
<keyword id="KW-0378">Hydrolase</keyword>
<keyword id="KW-0472">Membrane</keyword>
<keyword id="KW-0645">Protease</keyword>
<keyword id="KW-1185">Reference proteome</keyword>
<keyword id="KW-0720">Serine protease</keyword>
<keyword id="KW-0735">Signal-anchor</keyword>
<keyword id="KW-0812">Transmembrane</keyword>
<keyword id="KW-1133">Transmembrane helix</keyword>
<keyword id="KW-0926">Vacuole</keyword>
<comment type="function">
    <text evidence="1">Type IV dipeptidyl-peptidase which removes N-terminal dipeptides sequentially from polypeptides having unsubstituted N-termini provided that the penultimate residue is proline.</text>
</comment>
<comment type="catalytic activity">
    <reaction>
        <text>Release of an N-terminal dipeptide, Xaa-Yaa-|-Zaa-, from a polypeptide, preferentially when Yaa is Pro, provided Zaa is neither Pro nor hydroxyproline.</text>
        <dbReference type="EC" id="3.4.14.5"/>
    </reaction>
</comment>
<comment type="subcellular location">
    <subcellularLocation>
        <location evidence="1">Vacuole membrane</location>
        <topology evidence="1">Single-pass type II membrane protein</topology>
    </subcellularLocation>
    <text evidence="1">Lysosome-like vacuoles.</text>
</comment>
<comment type="similarity">
    <text evidence="4">Belongs to the peptidase S9B family.</text>
</comment>
<sequence>MTRRRSTSGTSSRSSTDSGLSVDTAYLEDNKHNNFANGTSGLTDETKYRDVEDAEADVDEPFLPTSSKKLGSGSRTRQIFWALVILCLGGWVLALVLFLTHGRASSQTASETLQQQESDSGSTSAGRPVTLQQVLTGSWNPRAHAISWIAGPDGEDGLLVQRAEVDKEGYMRVDDIRSQEGDDVDSQSGRILIDKAAVRVNGETLMPTFTWPSPDLNKVLLMSNHEKNWRYSFTGRYWIFDVATQTAQPLDPSVPDGRVQLALWSPSSDAVVFVRDNNMYLRKLSSESVVSITKDGGEDLFYGIPDWVYEEEVITDKSVTWWSNDGKYVAFLRTNESAVPEFPVQYFVSRPSGKRPPPGLENYPEVRQIKYPKAGSPNPVVNLLFYDVEKDEVFPVDVPDDFPDDDRIIIEVLWASEGKVIVRATNRESDRVKVFLIDTKSRTGKLVRFEDIANLDGGWVEPSHYTKFIPADPSNGRPDDGYIDTVIHDGYDHLAYFTPLDNPDPIMLTTGEWEVVEAPSAVDLRRGIVYFVATKESPTQRHVYRVHLDGSNLQALTDTSKPGFYDVSFSDGAGYALLSYNGPSVPWQAIINTGGDEITFEKTIEKNPRLASMVETYALPTEIYQNVTIDGFTLQLVERRPPHFNPAKKYPVVFQLYNGPTSQRVDRKFTIDFQSYIASNLGYIVVTLDARGTGYSGRKVRCAVRGNLGHYEAHDQITTAKMWAKKPYVDETRMAIWGWSYGGFMTLKVLEQDAGETFQYGMAVAPVTDWRFYDSVYTERYMHTPEHNPSGYENSTITNVSALSKATRFLLIHGASDDNVHIQNTLTFVDKLDLLNVQNYDMHFYPDSDHNIYFHNAHFMIYERLSNWLINAFNGEWHQIANPVPEDSIWDSVKRSVPAFAH</sequence>